<dbReference type="EC" id="2.7.1.48"/>
<dbReference type="EMBL" id="U00089">
    <property type="protein sequence ID" value="AAB95929.1"/>
    <property type="molecule type" value="Genomic_DNA"/>
</dbReference>
<dbReference type="PIR" id="S73607">
    <property type="entry name" value="S73607"/>
</dbReference>
<dbReference type="RefSeq" id="NP_110250.1">
    <property type="nucleotide sequence ID" value="NC_000912.1"/>
</dbReference>
<dbReference type="RefSeq" id="WP_010874918.1">
    <property type="nucleotide sequence ID" value="NZ_OU342337.1"/>
</dbReference>
<dbReference type="SMR" id="P75217"/>
<dbReference type="STRING" id="272634.MPN_561"/>
<dbReference type="EnsemblBacteria" id="AAB95929">
    <property type="protein sequence ID" value="AAB95929"/>
    <property type="gene ID" value="MPN_561"/>
</dbReference>
<dbReference type="GeneID" id="66608756"/>
<dbReference type="KEGG" id="mpn:MPN_561"/>
<dbReference type="PATRIC" id="fig|272634.6.peg.623"/>
<dbReference type="HOGENOM" id="CLU_021278_1_2_14"/>
<dbReference type="OrthoDB" id="9777642at2"/>
<dbReference type="BioCyc" id="MPNE272634:G1GJ3-921-MONOMER"/>
<dbReference type="UniPathway" id="UPA00574">
    <property type="reaction ID" value="UER00637"/>
</dbReference>
<dbReference type="UniPathway" id="UPA00579">
    <property type="reaction ID" value="UER00640"/>
</dbReference>
<dbReference type="Proteomes" id="UP000000808">
    <property type="component" value="Chromosome"/>
</dbReference>
<dbReference type="GO" id="GO:0005737">
    <property type="term" value="C:cytoplasm"/>
    <property type="evidence" value="ECO:0007669"/>
    <property type="project" value="UniProtKB-SubCell"/>
</dbReference>
<dbReference type="GO" id="GO:0005524">
    <property type="term" value="F:ATP binding"/>
    <property type="evidence" value="ECO:0007669"/>
    <property type="project" value="UniProtKB-UniRule"/>
</dbReference>
<dbReference type="GO" id="GO:0043771">
    <property type="term" value="F:cytidine kinase activity"/>
    <property type="evidence" value="ECO:0007669"/>
    <property type="project" value="RHEA"/>
</dbReference>
<dbReference type="GO" id="GO:0004849">
    <property type="term" value="F:uridine kinase activity"/>
    <property type="evidence" value="ECO:0007669"/>
    <property type="project" value="UniProtKB-UniRule"/>
</dbReference>
<dbReference type="GO" id="GO:0044211">
    <property type="term" value="P:CTP salvage"/>
    <property type="evidence" value="ECO:0007669"/>
    <property type="project" value="UniProtKB-UniRule"/>
</dbReference>
<dbReference type="GO" id="GO:0044206">
    <property type="term" value="P:UMP salvage"/>
    <property type="evidence" value="ECO:0007669"/>
    <property type="project" value="UniProtKB-UniRule"/>
</dbReference>
<dbReference type="CDD" id="cd02023">
    <property type="entry name" value="UMPK"/>
    <property type="match status" value="1"/>
</dbReference>
<dbReference type="Gene3D" id="3.40.50.300">
    <property type="entry name" value="P-loop containing nucleotide triphosphate hydrolases"/>
    <property type="match status" value="1"/>
</dbReference>
<dbReference type="HAMAP" id="MF_00551">
    <property type="entry name" value="Uridine_kinase"/>
    <property type="match status" value="1"/>
</dbReference>
<dbReference type="InterPro" id="IPR027417">
    <property type="entry name" value="P-loop_NTPase"/>
</dbReference>
<dbReference type="InterPro" id="IPR006083">
    <property type="entry name" value="PRK/URK"/>
</dbReference>
<dbReference type="InterPro" id="IPR026008">
    <property type="entry name" value="Uridine_kinase"/>
</dbReference>
<dbReference type="InterPro" id="IPR000764">
    <property type="entry name" value="Uridine_kinase-like"/>
</dbReference>
<dbReference type="NCBIfam" id="NF004018">
    <property type="entry name" value="PRK05480.1"/>
    <property type="match status" value="1"/>
</dbReference>
<dbReference type="NCBIfam" id="TIGR00235">
    <property type="entry name" value="udk"/>
    <property type="match status" value="1"/>
</dbReference>
<dbReference type="PANTHER" id="PTHR10285">
    <property type="entry name" value="URIDINE KINASE"/>
    <property type="match status" value="1"/>
</dbReference>
<dbReference type="Pfam" id="PF00485">
    <property type="entry name" value="PRK"/>
    <property type="match status" value="1"/>
</dbReference>
<dbReference type="PRINTS" id="PR00988">
    <property type="entry name" value="URIDINKINASE"/>
</dbReference>
<dbReference type="SUPFAM" id="SSF52540">
    <property type="entry name" value="P-loop containing nucleoside triphosphate hydrolases"/>
    <property type="match status" value="1"/>
</dbReference>
<proteinExistence type="inferred from homology"/>
<sequence length="213" mass="24912">MDSKKGILVAIGGGSCSGKTTIADMIYQLLRKKLKVAILPQDNYYKPYKNKSMAQRKAINFDHPDAFDWKLLWSHLDNLLMGKTVAVPMYDYVNYTRKKETIEIGPLNVVILEGLMPWFDERIAKLCKLKIFVEATGEERLIRRIERDWERGRDVASIIKQWREAVSPMYEIFVEKMKQKADLIIPWSERHEVSTNVLDFAIEHLFRKHVDPN</sequence>
<accession>P75217</accession>
<organism>
    <name type="scientific">Mycoplasma pneumoniae (strain ATCC 29342 / M129 / Subtype 1)</name>
    <name type="common">Mycoplasmoides pneumoniae</name>
    <dbReference type="NCBI Taxonomy" id="272634"/>
    <lineage>
        <taxon>Bacteria</taxon>
        <taxon>Bacillati</taxon>
        <taxon>Mycoplasmatota</taxon>
        <taxon>Mycoplasmoidales</taxon>
        <taxon>Mycoplasmoidaceae</taxon>
        <taxon>Mycoplasmoides</taxon>
    </lineage>
</organism>
<reference key="1">
    <citation type="journal article" date="1996" name="Nucleic Acids Res.">
        <title>Complete sequence analysis of the genome of the bacterium Mycoplasma pneumoniae.</title>
        <authorList>
            <person name="Himmelreich R."/>
            <person name="Hilbert H."/>
            <person name="Plagens H."/>
            <person name="Pirkl E."/>
            <person name="Li B.-C."/>
            <person name="Herrmann R."/>
        </authorList>
    </citation>
    <scope>NUCLEOTIDE SEQUENCE [LARGE SCALE GENOMIC DNA]</scope>
    <source>
        <strain>ATCC 29342 / M129 / Subtype 1</strain>
    </source>
</reference>
<feature type="chain" id="PRO_0000164481" description="Uridine kinase">
    <location>
        <begin position="1"/>
        <end position="213"/>
    </location>
</feature>
<feature type="binding site" evidence="2">
    <location>
        <begin position="13"/>
        <end position="20"/>
    </location>
    <ligand>
        <name>ATP</name>
        <dbReference type="ChEBI" id="CHEBI:30616"/>
    </ligand>
</feature>
<name>URK_MYCPN</name>
<gene>
    <name type="primary">udk</name>
    <name type="ordered locus">MPN_561</name>
    <name type="ORF">MP281</name>
</gene>
<evidence type="ECO:0000250" key="1"/>
<evidence type="ECO:0000255" key="2"/>
<evidence type="ECO:0000305" key="3"/>
<keyword id="KW-0067">ATP-binding</keyword>
<keyword id="KW-0963">Cytoplasm</keyword>
<keyword id="KW-0418">Kinase</keyword>
<keyword id="KW-0547">Nucleotide-binding</keyword>
<keyword id="KW-1185">Reference proteome</keyword>
<keyword id="KW-0808">Transferase</keyword>
<comment type="catalytic activity">
    <reaction>
        <text>uridine + ATP = UMP + ADP + H(+)</text>
        <dbReference type="Rhea" id="RHEA:16825"/>
        <dbReference type="ChEBI" id="CHEBI:15378"/>
        <dbReference type="ChEBI" id="CHEBI:16704"/>
        <dbReference type="ChEBI" id="CHEBI:30616"/>
        <dbReference type="ChEBI" id="CHEBI:57865"/>
        <dbReference type="ChEBI" id="CHEBI:456216"/>
        <dbReference type="EC" id="2.7.1.48"/>
    </reaction>
</comment>
<comment type="catalytic activity">
    <reaction>
        <text>cytidine + ATP = CMP + ADP + H(+)</text>
        <dbReference type="Rhea" id="RHEA:24674"/>
        <dbReference type="ChEBI" id="CHEBI:15378"/>
        <dbReference type="ChEBI" id="CHEBI:17562"/>
        <dbReference type="ChEBI" id="CHEBI:30616"/>
        <dbReference type="ChEBI" id="CHEBI:60377"/>
        <dbReference type="ChEBI" id="CHEBI:456216"/>
        <dbReference type="EC" id="2.7.1.48"/>
    </reaction>
</comment>
<comment type="pathway">
    <text>Pyrimidine metabolism; CTP biosynthesis via salvage pathway; CTP from cytidine: step 1/3.</text>
</comment>
<comment type="pathway">
    <text>Pyrimidine metabolism; UMP biosynthesis via salvage pathway; UMP from uridine: step 1/1.</text>
</comment>
<comment type="subcellular location">
    <subcellularLocation>
        <location evidence="1">Cytoplasm</location>
    </subcellularLocation>
</comment>
<comment type="similarity">
    <text evidence="3">Belongs to the uridine kinase family.</text>
</comment>
<protein>
    <recommendedName>
        <fullName>Uridine kinase</fullName>
        <ecNumber>2.7.1.48</ecNumber>
    </recommendedName>
    <alternativeName>
        <fullName>Cytidine monophosphokinase</fullName>
    </alternativeName>
    <alternativeName>
        <fullName>Uridine monophosphokinase</fullName>
    </alternativeName>
</protein>